<sequence>MTGPFDDDGPEEDAPVPAPPDHLAGLRGIDLVRRTLEEARGAARSQGKDVGRGRSGPARRVGGNRRRRTWSGPGPDARDPQLLGAVTQDLAKSRGWSARVAEGSVIGRWRAVVGDQIADHATPTALNEGVLTVTAESTASATQLRMVQSQLLAKIAAVVGDGVVTTLKIVGPAGPSWRKGRYHVSGRGPRDTYG</sequence>
<organism>
    <name type="scientific">Mycolicibacterium smegmatis</name>
    <name type="common">Mycobacterium smegmatis</name>
    <dbReference type="NCBI Taxonomy" id="1772"/>
    <lineage>
        <taxon>Bacteria</taxon>
        <taxon>Bacillati</taxon>
        <taxon>Actinomycetota</taxon>
        <taxon>Actinomycetes</taxon>
        <taxon>Mycobacteriales</taxon>
        <taxon>Mycobacteriaceae</taxon>
        <taxon>Mycolicibacterium</taxon>
    </lineage>
</organism>
<reference key="1">
    <citation type="journal article" date="1996" name="Mol. Microbiol.">
        <title>Organization of the origins of replication of the chromosomes of Mycobacterium smegmatis, Mycobacterium leprae and Mycobacterium tuberculosis and isolation of a functional origin from M. smegmatis.</title>
        <authorList>
            <person name="Salazar L."/>
            <person name="Fsihi H."/>
            <person name="De Rossi E."/>
            <person name="Riccardi G."/>
            <person name="Rios C."/>
            <person name="Cole S.T."/>
            <person name="Takiff H.E."/>
        </authorList>
    </citation>
    <scope>NUCLEOTIDE SEQUENCE [GENOMIC DNA]</scope>
    <source>
        <strain>ATCC 607 / DSM 43465 / JCM 20379 / NBRC 3207 / NRRL B-692</strain>
    </source>
</reference>
<evidence type="ECO:0000256" key="1">
    <source>
        <dbReference type="SAM" id="MobiDB-lite"/>
    </source>
</evidence>
<evidence type="ECO:0000305" key="2"/>
<dbReference type="EMBL" id="X92503">
    <property type="protein sequence ID" value="CAA63252.1"/>
    <property type="molecule type" value="Genomic_DNA"/>
</dbReference>
<dbReference type="PIR" id="S70990">
    <property type="entry name" value="S70990"/>
</dbReference>
<dbReference type="SMR" id="P0C564"/>
<dbReference type="HAMAP" id="MF_00630">
    <property type="entry name" value="UPF0232"/>
    <property type="match status" value="1"/>
</dbReference>
<dbReference type="InterPro" id="IPR007922">
    <property type="entry name" value="DciA-like"/>
</dbReference>
<dbReference type="InterPro" id="IPR023007">
    <property type="entry name" value="UPF0232_actinobac"/>
</dbReference>
<dbReference type="NCBIfam" id="NF002871">
    <property type="entry name" value="PRK03195.1"/>
    <property type="match status" value="1"/>
</dbReference>
<dbReference type="PANTHER" id="PTHR36456">
    <property type="entry name" value="UPF0232 PROTEIN SCO3875"/>
    <property type="match status" value="1"/>
</dbReference>
<dbReference type="PANTHER" id="PTHR36456:SF1">
    <property type="entry name" value="UPF0232 PROTEIN SCO3875"/>
    <property type="match status" value="1"/>
</dbReference>
<dbReference type="Pfam" id="PF05258">
    <property type="entry name" value="DciA"/>
    <property type="match status" value="1"/>
</dbReference>
<comment type="similarity">
    <text evidence="2">Belongs to the UPF0232 family.</text>
</comment>
<accession>P0C564</accession>
<accession>Q50408</accession>
<accession>Q50434</accession>
<proteinExistence type="inferred from homology"/>
<feature type="chain" id="PRO_0000211364" description="UPF0232 protein in recF-gyrB intergenic region">
    <location>
        <begin position="1"/>
        <end position="194"/>
    </location>
</feature>
<feature type="region of interest" description="Disordered" evidence="1">
    <location>
        <begin position="1"/>
        <end position="81"/>
    </location>
</feature>
<feature type="compositionally biased region" description="Acidic residues" evidence="1">
    <location>
        <begin position="1"/>
        <end position="14"/>
    </location>
</feature>
<feature type="compositionally biased region" description="Basic and acidic residues" evidence="1">
    <location>
        <begin position="30"/>
        <end position="52"/>
    </location>
</feature>
<protein>
    <recommendedName>
        <fullName>UPF0232 protein in recF-gyrB intergenic region</fullName>
    </recommendedName>
</protein>
<name>Y004_MYCSM</name>